<feature type="chain" id="PRO_0000343772" description="Protein Ycf2">
    <location>
        <begin position="1"/>
        <end position="2094"/>
    </location>
</feature>
<feature type="binding site" evidence="1">
    <location>
        <begin position="1385"/>
        <end position="1392"/>
    </location>
    <ligand>
        <name>ATP</name>
        <dbReference type="ChEBI" id="CHEBI:30616"/>
    </ligand>
</feature>
<name>YCF2_HUPLU</name>
<geneLocation type="chloroplast"/>
<reference key="1">
    <citation type="journal article" date="2005" name="Gene">
        <title>The first complete chloroplast genome sequence of a lycophyte, Huperzia lucidula (Lycopodiaceae).</title>
        <authorList>
            <person name="Wolf P.G."/>
            <person name="Karol K.G."/>
            <person name="Mandoli D.F."/>
            <person name="Kuehl J.V."/>
            <person name="Arumuganathan K."/>
            <person name="Ellis M.W."/>
            <person name="Mishler B.D."/>
            <person name="Kelch D.G."/>
            <person name="Olmstead R.G."/>
            <person name="Boore J.L."/>
        </authorList>
    </citation>
    <scope>NUCLEOTIDE SEQUENCE [LARGE SCALE GENOMIC DNA]</scope>
</reference>
<dbReference type="EMBL" id="AY660566">
    <property type="protein sequence ID" value="AAT80731.1"/>
    <property type="molecule type" value="Genomic_DNA"/>
</dbReference>
<dbReference type="RefSeq" id="YP_209535.1">
    <property type="nucleotide sequence ID" value="NC_006861.1"/>
</dbReference>
<dbReference type="GeneID" id="3283745"/>
<dbReference type="GO" id="GO:0009570">
    <property type="term" value="C:chloroplast stroma"/>
    <property type="evidence" value="ECO:0007669"/>
    <property type="project" value="UniProtKB-SubCell"/>
</dbReference>
<dbReference type="GO" id="GO:0005524">
    <property type="term" value="F:ATP binding"/>
    <property type="evidence" value="ECO:0007669"/>
    <property type="project" value="UniProtKB-KW"/>
</dbReference>
<dbReference type="GO" id="GO:0016887">
    <property type="term" value="F:ATP hydrolysis activity"/>
    <property type="evidence" value="ECO:0007669"/>
    <property type="project" value="InterPro"/>
</dbReference>
<dbReference type="CDD" id="cd19505">
    <property type="entry name" value="RecA-like_Ycf2"/>
    <property type="match status" value="1"/>
</dbReference>
<dbReference type="Gene3D" id="1.10.8.60">
    <property type="match status" value="1"/>
</dbReference>
<dbReference type="Gene3D" id="3.40.50.300">
    <property type="entry name" value="P-loop containing nucleotide triphosphate hydrolases"/>
    <property type="match status" value="1"/>
</dbReference>
<dbReference type="HAMAP" id="MF_01330">
    <property type="entry name" value="Ycf2"/>
    <property type="match status" value="1"/>
</dbReference>
<dbReference type="InterPro" id="IPR003959">
    <property type="entry name" value="ATPase_AAA_core"/>
</dbReference>
<dbReference type="InterPro" id="IPR027417">
    <property type="entry name" value="P-loop_NTPase"/>
</dbReference>
<dbReference type="InterPro" id="IPR008543">
    <property type="entry name" value="Uncharacterised_Ycf2"/>
</dbReference>
<dbReference type="InterPro" id="IPR056777">
    <property type="entry name" value="Ycf2_N"/>
</dbReference>
<dbReference type="PANTHER" id="PTHR33078:SF100">
    <property type="entry name" value="PROTEIN YCF2"/>
    <property type="match status" value="1"/>
</dbReference>
<dbReference type="PANTHER" id="PTHR33078">
    <property type="entry name" value="PROTEIN YCF2-RELATED"/>
    <property type="match status" value="1"/>
</dbReference>
<dbReference type="Pfam" id="PF00004">
    <property type="entry name" value="AAA"/>
    <property type="match status" value="1"/>
</dbReference>
<dbReference type="Pfam" id="PF05695">
    <property type="entry name" value="Ycf2"/>
    <property type="match status" value="2"/>
</dbReference>
<dbReference type="SUPFAM" id="SSF52540">
    <property type="entry name" value="P-loop containing nucleoside triphosphate hydrolases"/>
    <property type="match status" value="1"/>
</dbReference>
<organism>
    <name type="scientific">Huperzia lucidula</name>
    <name type="common">Shining clubmoss</name>
    <name type="synonym">Lycopodium lucidulum</name>
    <dbReference type="NCBI Taxonomy" id="37429"/>
    <lineage>
        <taxon>Eukaryota</taxon>
        <taxon>Viridiplantae</taxon>
        <taxon>Streptophyta</taxon>
        <taxon>Embryophyta</taxon>
        <taxon>Tracheophyta</taxon>
        <taxon>Lycopodiopsida</taxon>
        <taxon>Lycopodiales</taxon>
        <taxon>Lycopodiaceae</taxon>
        <taxon>Huperzioideae</taxon>
        <taxon>Huperzia</taxon>
    </lineage>
</organism>
<gene>
    <name evidence="1" type="primary">ycf2</name>
</gene>
<proteinExistence type="inferred from homology"/>
<comment type="function">
    <text evidence="1">Probable ATPase of unknown function. Its presence in a non-photosynthetic plant (Epifagus virginiana) and experiments in tobacco indicate that it has an essential function which is probably not related to photosynthesis.</text>
</comment>
<comment type="subcellular location">
    <subcellularLocation>
        <location evidence="1">Plastid</location>
        <location evidence="1">Chloroplast stroma</location>
    </subcellularLocation>
</comment>
<comment type="similarity">
    <text evidence="1">Belongs to the Ycf2 family.</text>
</comment>
<sequence length="2094" mass="246442">MEKKKKIIREVLRSGKVQNPQYLFNLWTNCNSFRLSTKIIFNWEHLIKLLDPRIIILLIPRDIRGFRSHISFICLVLFTLPIFMHGFNRKGLLETKHLYLSQVVDEHTNNGECKNTTQEECFKFLKYLDISPHNSFIYYRGSEKYISYLPGLEEGVVSTEHGISNNIGIMPPVYDQIKLLGLQWWKDCVIEGIFPSRGAYGEECISNNNFIYPEYKNTEDIKYFFEFYGEAKAWEINVSDSKSGGNTKFSIDLALDLTEKRYLNRNKKNFEWLFDKMSINHIHIDKQLINNSSTFWDLSPPARVERNNTKSKLFSKCFSKDSSICRIEKRFTEGIKYLMENLFYEGEKIIIDNFPKSISYAFSDVSSVDEPSMGFHTTEEPLNNNKFGFDKKYRNVFLKYSVRSDGNRIVDAWNTRNKFKNFCLNCFVLPDAGSCTIRRKPLNINKLDFIIFMNWDISRNIFLFPRLIPHKCNRHYIFHFLIKYKKGLVIKINQFYLSITKSNHIYESNELPLGVEYATENFFHCIANHGTGTPSWYKSIINIKEFFFTDLKKSLSSSYLKYESIYFLKYWIDEGLQKGKSFNNIARNTINQHSLNGVKGVRKGFYFYKGNKYVNWNLNLYEWSDHRTNRNFKRSPKRFICGNNYLKIMSNRTEFFTNRNSRSWSGKLENNYSKFYFICKNSIKKGFNLSIFNKSEKINTLGNSPKIIDTKSIYSEMNPSQNHEFLQELGFPSDKESITPLILNEIPVSKFTIDSFYNRFNINVEYMKLSDETTFFAILRNKDIWFDPIKLSNKSLLKTYFDQAIIPKFLDHLLYIQPDHNKKWYFYFCNTEENIITDSKFTYGQLLSILPKHNNVFLSSFVGIEPSDSEENTILVTQPKVSNIFFKCLKRSYNQIFALVNNSYKLLILLNRINLLFHKKINTSFTEQFSTITLLTGKQVVNLEITYYRQPDIEIFNLGRKNVNNGLLDEKALSPNLSVIQRQSYKHDLFSESLLRIRNKNNKMFHWFKKLFLINDSAGDSRSVTGSRVIGGKSTKLILLNNSNLFVEEIKKNETLFLSSSSPHLNERARNAETYKIYQVDSVEKKNALFRKYTPWFFTLKWWKYFLQTFTGVLPNGISLNSSDQFEYVPQICAQDREISDDQPKKALLNFIWSYSKSINCWNDKYLIIISLFLSSYLFFQNYLFNLIGSDYTDLCKHFGIIRYLIDRKSYWNKLVYQHPVKSIDTQNRFVNFLKKIGHYAKKRKLDLFTMEELNAWLTTNQSLDIFPRKKELLIQSPITRKKIYRYGFNLIYNPHLLSNDFGYKTTQQGLYYLRYLAESFDKSLVNYPFYHFNLAHKWVFLAFWQRITSPHVSRQTNTLGFTSHGIPIPLRLGLSPSKGNLLVGPPETGRSYLIKNLAADSYVPSIQVSISELLYNEPDITTKDWNVLMDNLHQLALILELTKEMSPCIVWIQNIHELNSNCLTQDIKSNSNLPLGLLLTYFRTNFVKNHTLSMIAFASTHIPEKIDPSLIYPNRLDRLMNIRMLSIPQRQKEFYIFLRSKCFHLENNLSCLNEFGYGTMGYDVRDLASLVNEVSSISITYDESVIYDDTIRLAFHRQALGFAYADTNIEYGQNDEKLLYKVGKAIVQTIITKKFTMNPLYKGNNFWKKRFYYLSEWFSEPPITETTVKEFTILSHILECLAGSAARDSWFRSENEQENSIPLDKYADNDSDSACTTLESLLVEFPRLEIYQDESISNKMRLAPYSRTTNLVNIMQNINFPIQYKQKLSELVSNTACSPRIWRFSFACNNIFNRVERPNEFRIPYYIGLFGENIQTLSKYLQNDFNDARFAQYIMKQQSPHNRVLSKMRRISLQELECQLETMLLKEQFETLGIFSPVQYPIEYRISNKPLLFLGKRFVWDPTGLLSKDHHLAFPYQQLFVDEEMLRRFYVTYGTEREQGKSQSIQKIKQFFVRRGYSRDSMSNLYISGLKQFTFADKQNIETFKSTERIGVQLKHPHLFAAVYSYQPWLMEYSQEKFAHFDLLNNHQGWLEVNSSLSSYSSVHSTLFESHQYLLNSFRCNKMLLNQIIKLLLKNRWLFKNEIETLLVLSKGG</sequence>
<accession>Q5SCW3</accession>
<evidence type="ECO:0000255" key="1">
    <source>
        <dbReference type="HAMAP-Rule" id="MF_01330"/>
    </source>
</evidence>
<keyword id="KW-0067">ATP-binding</keyword>
<keyword id="KW-0150">Chloroplast</keyword>
<keyword id="KW-0547">Nucleotide-binding</keyword>
<keyword id="KW-0934">Plastid</keyword>
<protein>
    <recommendedName>
        <fullName evidence="1">Protein Ycf2</fullName>
    </recommendedName>
</protein>